<organism>
    <name type="scientific">Mus musculus</name>
    <name type="common">Mouse</name>
    <dbReference type="NCBI Taxonomy" id="10090"/>
    <lineage>
        <taxon>Eukaryota</taxon>
        <taxon>Metazoa</taxon>
        <taxon>Chordata</taxon>
        <taxon>Craniata</taxon>
        <taxon>Vertebrata</taxon>
        <taxon>Euteleostomi</taxon>
        <taxon>Mammalia</taxon>
        <taxon>Eutheria</taxon>
        <taxon>Euarchontoglires</taxon>
        <taxon>Glires</taxon>
        <taxon>Rodentia</taxon>
        <taxon>Myomorpha</taxon>
        <taxon>Muroidea</taxon>
        <taxon>Muridae</taxon>
        <taxon>Murinae</taxon>
        <taxon>Mus</taxon>
        <taxon>Mus</taxon>
    </lineage>
</organism>
<name>SYTL2_MOUSE</name>
<protein>
    <recommendedName>
        <fullName>Synaptotagmin-like protein 2</fullName>
    </recommendedName>
    <alternativeName>
        <fullName>Exophilin-4</fullName>
    </alternativeName>
</protein>
<dbReference type="EMBL" id="AB057756">
    <property type="protein sequence ID" value="BAB41084.1"/>
    <property type="molecule type" value="mRNA"/>
</dbReference>
<dbReference type="EMBL" id="AB050742">
    <property type="protein sequence ID" value="BAB32652.1"/>
    <property type="molecule type" value="mRNA"/>
</dbReference>
<dbReference type="EMBL" id="AB057754">
    <property type="protein sequence ID" value="BAB41082.1"/>
    <property type="molecule type" value="mRNA"/>
</dbReference>
<dbReference type="EMBL" id="AB057755">
    <property type="protein sequence ID" value="BAB41083.1"/>
    <property type="molecule type" value="mRNA"/>
</dbReference>
<dbReference type="EMBL" id="AB057757">
    <property type="protein sequence ID" value="BAB41085.1"/>
    <property type="molecule type" value="mRNA"/>
</dbReference>
<dbReference type="EMBL" id="AB057760">
    <property type="protein sequence ID" value="BAB41088.1"/>
    <property type="molecule type" value="mRNA"/>
</dbReference>
<dbReference type="EMBL" id="AB057761">
    <property type="protein sequence ID" value="BAB41089.1"/>
    <property type="molecule type" value="mRNA"/>
</dbReference>
<dbReference type="EMBL" id="AB057762">
    <property type="protein sequence ID" value="BAB41090.1"/>
    <property type="molecule type" value="mRNA"/>
</dbReference>
<dbReference type="EMBL" id="AB057763">
    <property type="protein sequence ID" value="BAB41091.1"/>
    <property type="molecule type" value="mRNA"/>
</dbReference>
<dbReference type="EMBL" id="AK027924">
    <property type="status" value="NOT_ANNOTATED_CDS"/>
    <property type="molecule type" value="mRNA"/>
</dbReference>
<dbReference type="EMBL" id="BC138714">
    <property type="protein sequence ID" value="AAI38715.1"/>
    <property type="molecule type" value="mRNA"/>
</dbReference>
<dbReference type="EMBL" id="BC145398">
    <property type="protein sequence ID" value="AAI45399.1"/>
    <property type="molecule type" value="mRNA"/>
</dbReference>
<dbReference type="CCDS" id="CCDS40017.1">
    <molecule id="Q99N50-5"/>
</dbReference>
<dbReference type="CCDS" id="CCDS40018.1">
    <molecule id="Q99N50-4"/>
</dbReference>
<dbReference type="CCDS" id="CCDS80750.1">
    <molecule id="Q99N50-1"/>
</dbReference>
<dbReference type="CCDS" id="CCDS80751.1">
    <molecule id="Q99N50-3"/>
</dbReference>
<dbReference type="RefSeq" id="NP_001035174.1">
    <molecule id="Q99N50-4"/>
    <property type="nucleotide sequence ID" value="NM_001040085.2"/>
</dbReference>
<dbReference type="RefSeq" id="NP_001035176.1">
    <molecule id="Q99N50-6"/>
    <property type="nucleotide sequence ID" value="NM_001040087.2"/>
</dbReference>
<dbReference type="RefSeq" id="NP_001035177.1">
    <molecule id="Q99N50-8"/>
    <property type="nucleotide sequence ID" value="NM_001040088.2"/>
</dbReference>
<dbReference type="RefSeq" id="NP_001276512.1">
    <molecule id="Q99N50-1"/>
    <property type="nucleotide sequence ID" value="NM_001289583.1"/>
</dbReference>
<dbReference type="RefSeq" id="NP_001276513.1">
    <molecule id="Q99N50-3"/>
    <property type="nucleotide sequence ID" value="NM_001289584.1"/>
</dbReference>
<dbReference type="RefSeq" id="NP_001276515.1">
    <molecule id="Q99N50-6"/>
    <property type="nucleotide sequence ID" value="NM_001289586.1"/>
</dbReference>
<dbReference type="RefSeq" id="NP_113571.2">
    <molecule id="Q99N50-5"/>
    <property type="nucleotide sequence ID" value="NM_031394.3"/>
</dbReference>
<dbReference type="RefSeq" id="XP_036009495.1">
    <molecule id="Q99N50-8"/>
    <property type="nucleotide sequence ID" value="XM_036153602.1"/>
</dbReference>
<dbReference type="SMR" id="Q99N50"/>
<dbReference type="BioGRID" id="219955">
    <property type="interactions" value="4"/>
</dbReference>
<dbReference type="FunCoup" id="Q99N50">
    <property type="interactions" value="253"/>
</dbReference>
<dbReference type="IntAct" id="Q99N50">
    <property type="interactions" value="3"/>
</dbReference>
<dbReference type="STRING" id="10090.ENSMUSP00000139865"/>
<dbReference type="GlyGen" id="Q99N50">
    <property type="glycosylation" value="2 sites, 2 N-linked glycans (2 sites)"/>
</dbReference>
<dbReference type="iPTMnet" id="Q99N50"/>
<dbReference type="PhosphoSitePlus" id="Q99N50"/>
<dbReference type="PaxDb" id="10090-ENSMUSP00000102829"/>
<dbReference type="PeptideAtlas" id="Q99N50"/>
<dbReference type="ProteomicsDB" id="254745">
    <molecule id="Q99N50-1"/>
</dbReference>
<dbReference type="ProteomicsDB" id="254746">
    <molecule id="Q99N50-2"/>
</dbReference>
<dbReference type="ProteomicsDB" id="254747">
    <molecule id="Q99N50-3"/>
</dbReference>
<dbReference type="ProteomicsDB" id="254748">
    <molecule id="Q99N50-4"/>
</dbReference>
<dbReference type="ProteomicsDB" id="254749">
    <molecule id="Q99N50-5"/>
</dbReference>
<dbReference type="ProteomicsDB" id="254750">
    <molecule id="Q99N50-6"/>
</dbReference>
<dbReference type="ProteomicsDB" id="254751">
    <molecule id="Q99N50-7"/>
</dbReference>
<dbReference type="ProteomicsDB" id="254752">
    <molecule id="Q99N50-8"/>
</dbReference>
<dbReference type="ProteomicsDB" id="254753">
    <molecule id="Q99N50-11"/>
</dbReference>
<dbReference type="Pumba" id="Q99N50"/>
<dbReference type="Antibodypedia" id="49544">
    <property type="antibodies" value="71 antibodies from 12 providers"/>
</dbReference>
<dbReference type="DNASU" id="83671"/>
<dbReference type="Ensembl" id="ENSMUST00000107210.3">
    <molecule id="Q99N50-5"/>
    <property type="protein sequence ID" value="ENSMUSP00000102828.2"/>
    <property type="gene ID" value="ENSMUSG00000030616.17"/>
</dbReference>
<dbReference type="Ensembl" id="ENSMUST00000107211.8">
    <molecule id="Q99N50-4"/>
    <property type="protein sequence ID" value="ENSMUSP00000102829.2"/>
    <property type="gene ID" value="ENSMUSG00000030616.17"/>
</dbReference>
<dbReference type="Ensembl" id="ENSMUST00000190731.7">
    <molecule id="Q99N50-1"/>
    <property type="protein sequence ID" value="ENSMUSP00000139865.2"/>
    <property type="gene ID" value="ENSMUSG00000030616.17"/>
</dbReference>
<dbReference type="Ensembl" id="ENSMUST00000190837.7">
    <molecule id="Q99N50-3"/>
    <property type="protein sequence ID" value="ENSMUSP00000139450.2"/>
    <property type="gene ID" value="ENSMUSG00000030616.17"/>
</dbReference>
<dbReference type="GeneID" id="83671"/>
<dbReference type="KEGG" id="mmu:83671"/>
<dbReference type="UCSC" id="uc009iha.2">
    <molecule id="Q99N50-4"/>
    <property type="organism name" value="mouse"/>
</dbReference>
<dbReference type="UCSC" id="uc009ihb.2">
    <molecule id="Q99N50-5"/>
    <property type="organism name" value="mouse"/>
</dbReference>
<dbReference type="UCSC" id="uc009ihc.2">
    <molecule id="Q99N50-1"/>
    <property type="organism name" value="mouse"/>
</dbReference>
<dbReference type="UCSC" id="uc009ihg.2">
    <molecule id="Q99N50-6"/>
    <property type="organism name" value="mouse"/>
</dbReference>
<dbReference type="UCSC" id="uc009ihh.2">
    <molecule id="Q99N50-8"/>
    <property type="organism name" value="mouse"/>
</dbReference>
<dbReference type="UCSC" id="uc012fow.2">
    <molecule id="Q99N50-3"/>
    <property type="organism name" value="mouse"/>
</dbReference>
<dbReference type="UCSC" id="uc029wmx.2">
    <molecule id="Q99N50-7"/>
    <property type="organism name" value="mouse"/>
</dbReference>
<dbReference type="UCSC" id="uc057aig.1">
    <molecule id="Q99N50-2"/>
    <property type="organism name" value="mouse"/>
</dbReference>
<dbReference type="AGR" id="MGI:1933366"/>
<dbReference type="CTD" id="54843"/>
<dbReference type="MGI" id="MGI:1933366">
    <property type="gene designation" value="Sytl2"/>
</dbReference>
<dbReference type="VEuPathDB" id="HostDB:ENSMUSG00000030616"/>
<dbReference type="eggNOG" id="KOG1028">
    <property type="taxonomic scope" value="Eukaryota"/>
</dbReference>
<dbReference type="GeneTree" id="ENSGT00940000155843"/>
<dbReference type="HOGENOM" id="CLU_002711_2_0_1"/>
<dbReference type="InParanoid" id="Q99N50"/>
<dbReference type="PhylomeDB" id="Q99N50"/>
<dbReference type="Reactome" id="R-MMU-9824585">
    <property type="pathway name" value="Regulation of MITF-M-dependent genes involved in pigmentation"/>
</dbReference>
<dbReference type="BioGRID-ORCS" id="83671">
    <property type="hits" value="1 hit in 74 CRISPR screens"/>
</dbReference>
<dbReference type="ChiTaRS" id="Sytl2">
    <property type="organism name" value="mouse"/>
</dbReference>
<dbReference type="PRO" id="PR:Q99N50"/>
<dbReference type="Proteomes" id="UP000000589">
    <property type="component" value="Chromosome 7"/>
</dbReference>
<dbReference type="RNAct" id="Q99N50">
    <property type="molecule type" value="protein"/>
</dbReference>
<dbReference type="Bgee" id="ENSMUSG00000030616">
    <property type="expression patterns" value="Expressed in iris and 214 other cell types or tissues"/>
</dbReference>
<dbReference type="ExpressionAtlas" id="Q99N50">
    <property type="expression patterns" value="baseline and differential"/>
</dbReference>
<dbReference type="GO" id="GO:0042470">
    <property type="term" value="C:melanosome"/>
    <property type="evidence" value="ECO:0000314"/>
    <property type="project" value="UniProtKB"/>
</dbReference>
<dbReference type="GO" id="GO:0033162">
    <property type="term" value="C:melanosome membrane"/>
    <property type="evidence" value="ECO:0007669"/>
    <property type="project" value="UniProtKB-SubCell"/>
</dbReference>
<dbReference type="GO" id="GO:0016020">
    <property type="term" value="C:membrane"/>
    <property type="evidence" value="ECO:0000314"/>
    <property type="project" value="MGI"/>
</dbReference>
<dbReference type="GO" id="GO:0005886">
    <property type="term" value="C:plasma membrane"/>
    <property type="evidence" value="ECO:0000314"/>
    <property type="project" value="UniProtKB"/>
</dbReference>
<dbReference type="GO" id="GO:0042043">
    <property type="term" value="F:neurexin family protein binding"/>
    <property type="evidence" value="ECO:0000314"/>
    <property type="project" value="UniProtKB"/>
</dbReference>
<dbReference type="GO" id="GO:0019902">
    <property type="term" value="F:phosphatase binding"/>
    <property type="evidence" value="ECO:0000250"/>
    <property type="project" value="UniProtKB"/>
</dbReference>
<dbReference type="GO" id="GO:0031267">
    <property type="term" value="F:small GTPase binding"/>
    <property type="evidence" value="ECO:0007669"/>
    <property type="project" value="InterPro"/>
</dbReference>
<dbReference type="GO" id="GO:0006887">
    <property type="term" value="P:exocytosis"/>
    <property type="evidence" value="ECO:0000314"/>
    <property type="project" value="UniProtKB"/>
</dbReference>
<dbReference type="GO" id="GO:0006886">
    <property type="term" value="P:intracellular protein transport"/>
    <property type="evidence" value="ECO:0007669"/>
    <property type="project" value="InterPro"/>
</dbReference>
<dbReference type="GO" id="GO:0070257">
    <property type="term" value="P:positive regulation of mucus secretion"/>
    <property type="evidence" value="ECO:0000315"/>
    <property type="project" value="UniProtKB"/>
</dbReference>
<dbReference type="GO" id="GO:0072659">
    <property type="term" value="P:protein localization to plasma membrane"/>
    <property type="evidence" value="ECO:0000314"/>
    <property type="project" value="MGI"/>
</dbReference>
<dbReference type="CDD" id="cd08393">
    <property type="entry name" value="C2A_SLP-1_2"/>
    <property type="match status" value="1"/>
</dbReference>
<dbReference type="CDD" id="cd04020">
    <property type="entry name" value="C2B_SLP_1-2-3-4"/>
    <property type="match status" value="1"/>
</dbReference>
<dbReference type="FunFam" id="2.60.40.150:FF:000006">
    <property type="entry name" value="Synaptotagmin-like 5, isoform CRA_a"/>
    <property type="match status" value="1"/>
</dbReference>
<dbReference type="FunFam" id="2.60.40.150:FF:000040">
    <property type="entry name" value="synaptotagmin-like protein 2 isoform X2"/>
    <property type="match status" value="1"/>
</dbReference>
<dbReference type="Gene3D" id="6.10.250.3000">
    <property type="match status" value="1"/>
</dbReference>
<dbReference type="Gene3D" id="2.60.40.150">
    <property type="entry name" value="C2 domain"/>
    <property type="match status" value="2"/>
</dbReference>
<dbReference type="InterPro" id="IPR000008">
    <property type="entry name" value="C2_dom"/>
</dbReference>
<dbReference type="InterPro" id="IPR035892">
    <property type="entry name" value="C2_domain_sf"/>
</dbReference>
<dbReference type="InterPro" id="IPR041282">
    <property type="entry name" value="FYVE_2"/>
</dbReference>
<dbReference type="InterPro" id="IPR010911">
    <property type="entry name" value="Rab_BD"/>
</dbReference>
<dbReference type="InterPro" id="IPR043567">
    <property type="entry name" value="SYTL1-5_C2B"/>
</dbReference>
<dbReference type="PANTHER" id="PTHR45716">
    <property type="entry name" value="BITESIZE, ISOFORM I"/>
    <property type="match status" value="1"/>
</dbReference>
<dbReference type="PANTHER" id="PTHR45716:SF5">
    <property type="entry name" value="SYNAPTOTAGMIN-LIKE PROTEIN 2"/>
    <property type="match status" value="1"/>
</dbReference>
<dbReference type="Pfam" id="PF00168">
    <property type="entry name" value="C2"/>
    <property type="match status" value="2"/>
</dbReference>
<dbReference type="Pfam" id="PF02318">
    <property type="entry name" value="FYVE_2"/>
    <property type="match status" value="1"/>
</dbReference>
<dbReference type="SMART" id="SM00239">
    <property type="entry name" value="C2"/>
    <property type="match status" value="2"/>
</dbReference>
<dbReference type="SUPFAM" id="SSF49562">
    <property type="entry name" value="C2 domain (Calcium/lipid-binding domain, CaLB)"/>
    <property type="match status" value="2"/>
</dbReference>
<dbReference type="PROSITE" id="PS50004">
    <property type="entry name" value="C2"/>
    <property type="match status" value="2"/>
</dbReference>
<dbReference type="PROSITE" id="PS50916">
    <property type="entry name" value="RABBD"/>
    <property type="match status" value="1"/>
</dbReference>
<keyword id="KW-0025">Alternative splicing</keyword>
<keyword id="KW-1003">Cell membrane</keyword>
<keyword id="KW-0268">Exocytosis</keyword>
<keyword id="KW-0472">Membrane</keyword>
<keyword id="KW-1185">Reference proteome</keyword>
<keyword id="KW-0677">Repeat</keyword>
<proteinExistence type="evidence at protein level"/>
<sequence length="950" mass="106806">MIDLSFLTEEEQDAILKVLQRDAALKRAEEERVRHLPEKIKDDQQLKNMSGQWFYEAKAKRHRDKIHGADIIRASMRRKKLPAAAEQNKDTAMRAKESWVNNVNKDAVLPPEIAVVEEPEDDTDPAGPSSSLVDPASSVIDMSQESTRTPAVSLPKQRKNPFNSPKLPEDHSLQQTKPEQSKTGKAGLFQISKEGELSESKEKSSIPDMPRQQLEKPKQTVSTEPENASHTKAPIPKARKLIYKSNDLEKDDNQSFPRQRRDSLNARGAPRGILKRNSSSSSTDSETLRLNYNLDPKSKILSPGLTIHERISEKEFSLEDDSSTSSLEPLKHVRFSAVKNELPQSPRPVLGQEVGEFTVLESDQLQNGTEDAGDIEEFQNHPELSHKTPLSHYQLVSSPSDSGREREQLMSSGSAPRDEIPCHSDILPTGPQCVESSSVINGQQEKSSHFTKLPSELSKSPSDELTQCGEPEPSQTADHSFRDHRQGSEEEHSPVLKTLERRAARKLPSKSLEDIPSDSSNQAKVDNLPEELVRSAEDDQKADQEPDTNECIPGISTVPSLPDNQFSHPDKLKRMSKSVPAFLQDESDDRETDTASESSYQLRRYKKSPSSLTNLSSSSGMTSLSSASGSVMSVYSGDFGNLEVKGSVQFALDYVESLKELHVFVAQCKDLAAADVKKQRSDPYVKTYLLPDKGKMGKKKTLVVKKTLNPVYNEILRYKIERQFLKTQKLNLSVWHRDTFKRNSFLGEVELDLETWDWDSKQNKQLKWYPLKRKTAPVALETENRGEMKLALQYVPEPSPGKKLPTTGEVHIWVKECLDLPLLRGSHLNSFVKCTILPDTSRKSRQKTRAVGKTTNPVFNHTMVYDGFRPEDLMEACVELTVWDHYKLTNQFLGGLRIGFGTGKSYGTEVDWMDSTSEEVALWEKMVNSPNTWVEATLPLRMLLIAKLSK</sequence>
<evidence type="ECO:0000250" key="1"/>
<evidence type="ECO:0000255" key="2">
    <source>
        <dbReference type="PROSITE-ProRule" id="PRU00041"/>
    </source>
</evidence>
<evidence type="ECO:0000255" key="3">
    <source>
        <dbReference type="PROSITE-ProRule" id="PRU00234"/>
    </source>
</evidence>
<evidence type="ECO:0000256" key="4">
    <source>
        <dbReference type="SAM" id="MobiDB-lite"/>
    </source>
</evidence>
<evidence type="ECO:0000269" key="5">
    <source>
    </source>
</evidence>
<evidence type="ECO:0000269" key="6">
    <source>
    </source>
</evidence>
<evidence type="ECO:0000269" key="7">
    <source>
    </source>
</evidence>
<evidence type="ECO:0000269" key="8">
    <source>
    </source>
</evidence>
<evidence type="ECO:0000269" key="9">
    <source>
    </source>
</evidence>
<evidence type="ECO:0000269" key="10">
    <source>
    </source>
</evidence>
<evidence type="ECO:0000269" key="11">
    <source>
    </source>
</evidence>
<evidence type="ECO:0000303" key="12">
    <source>
    </source>
</evidence>
<evidence type="ECO:0000303" key="13">
    <source>
    </source>
</evidence>
<evidence type="ECO:0000303" key="14">
    <source>
    </source>
</evidence>
<evidence type="ECO:0000303" key="15">
    <source>
    </source>
</evidence>
<evidence type="ECO:0000303" key="16">
    <source>
    </source>
</evidence>
<evidence type="ECO:0000305" key="17"/>
<gene>
    <name type="primary">Sytl2</name>
    <name type="synonym">Slp2</name>
</gene>
<comment type="function">
    <text evidence="8 9 11">Isoform 11 acts as a RAB27A effector protein and plays a role in cytotoxic granule exocytosis in lymphocytes. Required for cytotoxic granule docking at the immunologic synapse. Isoform 1 may play a role in melanosome transport and vesicle trafficking. It controls melanosome distribution in the cell periphery and regulates melanocyte morphology. Isoform 1 acts as a positive mediator of mucus secretion by the surface mucus cells of the stomach. Mediates basal mucus secretion by gastric surface cells by promoting the proper granule biognesis and docking of mucus granules with the apical plasma membrane.</text>
</comment>
<comment type="subunit">
    <text evidence="5 7 9 10 11">Monomer. Binds NRXN1. Binds RAB27A that has been activated by GTP-binding. Interacts with RAB27B.</text>
</comment>
<comment type="subcellular location">
    <molecule>Isoform 1</molecule>
    <subcellularLocation>
        <location evidence="8">Melanosome membrane</location>
        <topology evidence="8">Peripheral membrane protein</topology>
    </subcellularLocation>
    <text evidence="8">Bound to melanosomes. Isoform 1 is localized mainly on peripheral melanosomes but not on less mature melanosomes around the nucleus.</text>
</comment>
<comment type="subcellular location">
    <molecule>Isoform 11</molecule>
    <subcellularLocation>
        <location evidence="5 10 11">Cell membrane</location>
    </subcellularLocation>
    <text evidence="10">In the pancreatic alpha cells distributed in both peripheral and anterior regions. Localizes on the glucagon granules in the cell periphery.</text>
</comment>
<comment type="alternative products">
    <event type="alternative splicing"/>
    <isoform>
        <id>Q99N50-1</id>
        <name>1</name>
        <name>Slp2-a</name>
        <sequence type="displayed"/>
    </isoform>
    <isoform>
        <id>Q99N50-2</id>
        <name>2</name>
        <name>Slp2-b</name>
        <sequence type="described" ref="VSP_007889"/>
    </isoform>
    <isoform>
        <id>Q99N50-3</id>
        <name>3</name>
        <name>Slp2-a delta 2S-I</name>
        <sequence type="described" ref="VSP_007892"/>
    </isoform>
    <isoform>
        <id>Q99N50-4</id>
        <name>4</name>
        <name>Slp2-a delta 2S-II</name>
        <sequence type="described" ref="VSP_007893"/>
    </isoform>
    <isoform>
        <id>Q99N50-5</id>
        <name>5</name>
        <name>Slp2-a delta 2S-III</name>
        <sequence type="described" ref="VSP_007894"/>
    </isoform>
    <isoform>
        <id>Q99N50-6</id>
        <name>6</name>
        <name>Slp2-c</name>
        <sequence type="described" ref="VSP_007890"/>
    </isoform>
    <isoform>
        <id>Q99N50-7</id>
        <name>7</name>
        <name>Slp2-d delta 2S-IV</name>
        <sequence type="described" ref="VSP_007891"/>
    </isoform>
    <isoform>
        <id>Q99N50-8</id>
        <name>8</name>
        <sequence type="described" ref="VSP_007890 VSP_007894"/>
    </isoform>
    <isoform>
        <id>Q99N50-9</id>
        <name>9</name>
        <name>Slp2-e</name>
        <sequence type="not described"/>
    </isoform>
    <isoform>
        <id>Q99N50-10</id>
        <name>10</name>
        <name>Slp2-f</name>
        <sequence type="not described"/>
    </isoform>
    <isoform>
        <id>Q99N50-11</id>
        <name>11</name>
        <sequence type="described" ref="VSP_007893 VSP_007894"/>
    </isoform>
    <text>Additional isoforms seem to exist.</text>
</comment>
<comment type="tissue specificity">
    <text evidence="6 9 10 11">Highly expressed in brain, lung, kidney, testis and in embryos after day 7. Detected at lower levels in skeletal muscle. Expressed in pancreatic alpha cells. Isoform 6 is highly expressed in brain, but not detectable in the other tissues tested. Isoform 1 is expressed abundantly in the stomach and is predominantly localized at the apical region of gastric-surface mucus cells. Isoform 11 is expressed in cytotoxic T-lymphocytes (CTL).</text>
</comment>
<comment type="domain">
    <text evidence="1">The RabBD domain mediates interaction with RAB27A.</text>
</comment>
<comment type="domain">
    <text evidence="1">The C2 1 domain mediates localization to the cell membrane.</text>
</comment>
<comment type="PTM">
    <text>Isoform 1 is highly susceptible to proteolytic degradation and is stabilized by the interaction with RAB27A.</text>
</comment>
<comment type="disruption phenotype">
    <text evidence="9">Mice show a reduced number of mucus granules, a deficiency of granule docking with the apical plasma membrane in the gastric-surface mucus cells and reduction of mucus secretion by gastric primary cells.</text>
</comment>
<comment type="miscellaneous">
    <molecule>Isoform 9</molecule>
    <text evidence="17">Due to intron retention.</text>
</comment>
<comment type="miscellaneous">
    <molecule>Isoform 10</molecule>
    <text evidence="17">Due to intron retention.</text>
</comment>
<feature type="chain" id="PRO_0000190214" description="Synaptotagmin-like protein 2">
    <location>
        <begin position="1"/>
        <end position="950"/>
    </location>
</feature>
<feature type="domain" description="RabBD" evidence="3">
    <location>
        <begin position="1"/>
        <end position="57"/>
    </location>
</feature>
<feature type="domain" description="C2 1" evidence="2">
    <location>
        <begin position="644"/>
        <end position="769"/>
    </location>
</feature>
<feature type="domain" description="C2 2" evidence="2">
    <location>
        <begin position="784"/>
        <end position="913"/>
    </location>
</feature>
<feature type="region of interest" description="Disordered" evidence="4">
    <location>
        <begin position="78"/>
        <end position="98"/>
    </location>
</feature>
<feature type="region of interest" description="Disordered" evidence="4">
    <location>
        <begin position="116"/>
        <end position="289"/>
    </location>
</feature>
<feature type="region of interest" description="Disordered" evidence="4">
    <location>
        <begin position="361"/>
        <end position="620"/>
    </location>
</feature>
<feature type="compositionally biased region" description="Basic and acidic residues" evidence="4">
    <location>
        <begin position="87"/>
        <end position="97"/>
    </location>
</feature>
<feature type="compositionally biased region" description="Polar residues" evidence="4">
    <location>
        <begin position="140"/>
        <end position="150"/>
    </location>
</feature>
<feature type="compositionally biased region" description="Polar residues" evidence="4">
    <location>
        <begin position="173"/>
        <end position="183"/>
    </location>
</feature>
<feature type="compositionally biased region" description="Basic and acidic residues" evidence="4">
    <location>
        <begin position="193"/>
        <end position="205"/>
    </location>
</feature>
<feature type="compositionally biased region" description="Polar residues" evidence="4">
    <location>
        <begin position="219"/>
        <end position="230"/>
    </location>
</feature>
<feature type="compositionally biased region" description="Basic and acidic residues" evidence="4">
    <location>
        <begin position="246"/>
        <end position="264"/>
    </location>
</feature>
<feature type="compositionally biased region" description="Polar residues" evidence="4">
    <location>
        <begin position="434"/>
        <end position="445"/>
    </location>
</feature>
<feature type="compositionally biased region" description="Basic and acidic residues" evidence="4">
    <location>
        <begin position="479"/>
        <end position="502"/>
    </location>
</feature>
<feature type="compositionally biased region" description="Basic and acidic residues" evidence="4">
    <location>
        <begin position="531"/>
        <end position="544"/>
    </location>
</feature>
<feature type="compositionally biased region" description="Polar residues" evidence="4">
    <location>
        <begin position="557"/>
        <end position="567"/>
    </location>
</feature>
<feature type="compositionally biased region" description="Low complexity" evidence="4">
    <location>
        <begin position="608"/>
        <end position="620"/>
    </location>
</feature>
<feature type="splice variant" id="VSP_007891" description="In isoform 7." evidence="13">
    <location>
        <begin position="1"/>
        <end position="695"/>
    </location>
</feature>
<feature type="splice variant" id="VSP_007890" description="In isoform 6 and isoform 8." evidence="12 13 15">
    <location>
        <begin position="1"/>
        <end position="574"/>
    </location>
</feature>
<feature type="splice variant" id="VSP_007889" description="In isoform 2." evidence="13">
    <original>MIDLSFLTEEEQDAILKVLQRDAALKRAEEERVRHLPEKIKDDQQLKNMSGQWFYEAKAKRHRDKIHGADIIRASMRRKKLPAAAEQNKDTAMRAKESWVNNVNKDAVLPPEIAVVEEPEDDTDPAGPSSSLVDPASSVIDMSQESTRTPAVSLPKQRKNPFNSPKLPEDHSLQQTKPEQSKTGKAGLFQISKEGELSESKEKSSIPDMPRQQLEKPKQTVSTEPENASHTKAPIPKARKLIYKSNDLEKDDNQSFPRQRRDSLNARGAPRGILKRNSSSSSTDSETLRLNYNLDPKSKILSPGLTIHERISEKEFSLEDDSSTSSLEPLKHVRFSAVKNELPQSPRPVLGQEVGEFTVLESDQLQNGTEDAGDIEEFQNHPELSHKTPLSHYQLVSSPSDSGREREQLMSSGSAPRDEIPCHSDILPTGPQCVESSSVINGQQEKSSHFTKLPSELSKSPSDELTQCGEPEPSQTADHSFRDHRQG</original>
    <variation>MEKLNFKCMPQEPPDETIFPQKTLSIEPSKENEGKNTEYFGTQVIKKACSEQEIQESIVKTSILPKVSKDTFNDRLQKLLAEATLPASQTSGKEVHEQQALKVGVSENGKSFAKDEEEVTGLRESPKEPQRRNQQDCSVDKLLKESTRTPLSPLQSPLEAVTTRPISPLKDDLLFEKWMKENHSPSADQREITAPFPQGVGILAGADLIQKGKHCNTEAMLQLAAEGSPPLAQLPHSFDGVSSSPADMSLSWDAQLPSENGTLPSQKEISEAIEKVVLPSKPAATDVNAVLQKLLREAGEVDAKLPEREQTAGTPSCPQRVSPLWPAPDPVVPNKDFHSFCTVPDTTHEGRSHLSARMSPSAHATMSPTSTVTQYGQRLLQEVAETVRETVIQPKSQYPEFRAGLEKLLKETLQTSLSKDKKDTMTISPSALTGSCEMSHQLSSEFHLTEIQETVEKAEAPSVTESSFDVGLEKLLKEMSEGPCQLQASGRRDTLEKQPSQVEQAGFMGEIPHHILDGPGASKMKVSCSGLESQISQCDKQLGGDEAVTGPLIDVQDNKSGFEVPECSQLHEDHKIETNGTIQFVEDKGREKVITGETQASQEPGFEEAPKEMSVSRNKHSIVLLETKGKAIKTREVKLVLATPYKRQEEEQGPEACSEYEFSDGNTSSNRENGRNTSS</variation>
    <location>
        <begin position="1"/>
        <end position="487"/>
    </location>
</feature>
<feature type="splice variant" id="VSP_007892" description="In isoform 3." evidence="13">
    <location>
        <begin position="85"/>
        <end position="111"/>
    </location>
</feature>
<feature type="splice variant" id="VSP_007893" description="In isoform 4 and isoform 11." evidence="13 16">
    <original>DQKADQEPDTNECIPGI</original>
    <variation>V</variation>
    <location>
        <begin position="539"/>
        <end position="555"/>
    </location>
</feature>
<feature type="splice variant" id="VSP_007894" description="In isoform 5, isoform 8 and isoform 11." evidence="13 14 15 16">
    <location>
        <begin position="587"/>
        <end position="626"/>
    </location>
</feature>
<feature type="mutagenesis site" description="Loss of membrane localization; when associated with Q-699; Q-700; Q-705 and Q-706." evidence="8">
    <original>K</original>
    <variation>Q</variation>
    <location>
        <position position="698"/>
    </location>
</feature>
<feature type="mutagenesis site" description="Loss of membrane localization; when associated with Q-698; Q-700; Q-705 and Q-706." evidence="8">
    <original>K</original>
    <variation>Q</variation>
    <location>
        <position position="699"/>
    </location>
</feature>
<feature type="mutagenesis site" description="Loss of membrane localization; when associated with Q-698; Q-699; Q-705 and Q-706." evidence="8">
    <original>K</original>
    <variation>Q</variation>
    <location>
        <position position="700"/>
    </location>
</feature>
<feature type="mutagenesis site" description="Loss of membrane localization; when associated with Q-698; Q-699; Q-700 and Q-706." evidence="8">
    <original>K</original>
    <variation>Q</variation>
    <location>
        <position position="705"/>
    </location>
</feature>
<feature type="mutagenesis site" description="Loss of membrane localization; when associated with Q-698; Q-699; Q-700 and Q-705." evidence="8">
    <original>K</original>
    <variation>Q</variation>
    <location>
        <position position="706"/>
    </location>
</feature>
<accession>Q99N50</accession>
<accession>B2RS48</accession>
<accession>B7ZNS4</accession>
<accession>Q8BT37</accession>
<accession>Q99J89</accession>
<accession>Q99J90</accession>
<accession>Q99N51</accession>
<accession>Q99N52</accession>
<accession>Q99N55</accession>
<accession>Q99N56</accession>
<reference key="1">
    <citation type="journal article" date="2001" name="Biochem. Biophys. Res. Commun.">
        <title>Synaptotagmin-like protein 1-3: a novel family of C-terminal-type tandem C2 proteins.</title>
        <authorList>
            <person name="Fukuda M."/>
            <person name="Mikoshiba K."/>
        </authorList>
    </citation>
    <scope>NUCLEOTIDE SEQUENCE [MRNA] (ISOFORM 6)</scope>
    <scope>SUBCELLULAR LOCATION</scope>
    <scope>INTERACTION WITH NRXN1</scope>
    <source>
        <strain>BALB/cJ</strain>
        <tissue>Brain</tissue>
    </source>
</reference>
<reference key="2">
    <citation type="journal article" date="2001" name="Biochem. Biophys. Res. Commun.">
        <title>Novel splicing isoforms of synaptotagmin-like proteins 2 and 3: identification of the Slp homology domain.</title>
        <authorList>
            <person name="Fukuda M."/>
            <person name="Saegusa C."/>
            <person name="Mikoshiba K."/>
        </authorList>
    </citation>
    <scope>NUCLEOTIDE SEQUENCE [MRNA] (ISOFORMS 1; 2; 3; 4; 5; 6 AND 7)</scope>
    <scope>TISSUE SPECIFICITY</scope>
    <source>
        <strain>BALB/cJ</strain>
        <tissue>Brain</tissue>
    </source>
</reference>
<reference key="3">
    <citation type="journal article" date="2008" name="Traffic">
        <title>Slp1 and Slp2-a localize to the plasma membrane of CTL and contribute to secretion from the immunological synapse.</title>
        <authorList>
            <person name="Holt O."/>
            <person name="Kanno E."/>
            <person name="Bossi G."/>
            <person name="Booth S."/>
            <person name="Daniele T."/>
            <person name="Santoro A."/>
            <person name="Arico M."/>
            <person name="Saegusa C."/>
            <person name="Fukuda M."/>
            <person name="Griffiths G.M."/>
        </authorList>
    </citation>
    <scope>NUCLEOTIDE SEQUENCE [MRNA] (ISOFORMS 4 AND 11)</scope>
    <scope>FUNCTION</scope>
    <scope>SUBCELLULAR LOCATION</scope>
    <scope>INTERACTION WITH RAB27A</scope>
    <scope>PROTEOLYTIC PROCESSING</scope>
    <scope>TISSUE SPECIFICITY</scope>
</reference>
<reference key="4">
    <citation type="journal article" date="2005" name="Science">
        <title>The transcriptional landscape of the mammalian genome.</title>
        <authorList>
            <person name="Carninci P."/>
            <person name="Kasukawa T."/>
            <person name="Katayama S."/>
            <person name="Gough J."/>
            <person name="Frith M.C."/>
            <person name="Maeda N."/>
            <person name="Oyama R."/>
            <person name="Ravasi T."/>
            <person name="Lenhard B."/>
            <person name="Wells C."/>
            <person name="Kodzius R."/>
            <person name="Shimokawa K."/>
            <person name="Bajic V.B."/>
            <person name="Brenner S.E."/>
            <person name="Batalov S."/>
            <person name="Forrest A.R."/>
            <person name="Zavolan M."/>
            <person name="Davis M.J."/>
            <person name="Wilming L.G."/>
            <person name="Aidinis V."/>
            <person name="Allen J.E."/>
            <person name="Ambesi-Impiombato A."/>
            <person name="Apweiler R."/>
            <person name="Aturaliya R.N."/>
            <person name="Bailey T.L."/>
            <person name="Bansal M."/>
            <person name="Baxter L."/>
            <person name="Beisel K.W."/>
            <person name="Bersano T."/>
            <person name="Bono H."/>
            <person name="Chalk A.M."/>
            <person name="Chiu K.P."/>
            <person name="Choudhary V."/>
            <person name="Christoffels A."/>
            <person name="Clutterbuck D.R."/>
            <person name="Crowe M.L."/>
            <person name="Dalla E."/>
            <person name="Dalrymple B.P."/>
            <person name="de Bono B."/>
            <person name="Della Gatta G."/>
            <person name="di Bernardo D."/>
            <person name="Down T."/>
            <person name="Engstrom P."/>
            <person name="Fagiolini M."/>
            <person name="Faulkner G."/>
            <person name="Fletcher C.F."/>
            <person name="Fukushima T."/>
            <person name="Furuno M."/>
            <person name="Futaki S."/>
            <person name="Gariboldi M."/>
            <person name="Georgii-Hemming P."/>
            <person name="Gingeras T.R."/>
            <person name="Gojobori T."/>
            <person name="Green R.E."/>
            <person name="Gustincich S."/>
            <person name="Harbers M."/>
            <person name="Hayashi Y."/>
            <person name="Hensch T.K."/>
            <person name="Hirokawa N."/>
            <person name="Hill D."/>
            <person name="Huminiecki L."/>
            <person name="Iacono M."/>
            <person name="Ikeo K."/>
            <person name="Iwama A."/>
            <person name="Ishikawa T."/>
            <person name="Jakt M."/>
            <person name="Kanapin A."/>
            <person name="Katoh M."/>
            <person name="Kawasawa Y."/>
            <person name="Kelso J."/>
            <person name="Kitamura H."/>
            <person name="Kitano H."/>
            <person name="Kollias G."/>
            <person name="Krishnan S.P."/>
            <person name="Kruger A."/>
            <person name="Kummerfeld S.K."/>
            <person name="Kurochkin I.V."/>
            <person name="Lareau L.F."/>
            <person name="Lazarevic D."/>
            <person name="Lipovich L."/>
            <person name="Liu J."/>
            <person name="Liuni S."/>
            <person name="McWilliam S."/>
            <person name="Madan Babu M."/>
            <person name="Madera M."/>
            <person name="Marchionni L."/>
            <person name="Matsuda H."/>
            <person name="Matsuzawa S."/>
            <person name="Miki H."/>
            <person name="Mignone F."/>
            <person name="Miyake S."/>
            <person name="Morris K."/>
            <person name="Mottagui-Tabar S."/>
            <person name="Mulder N."/>
            <person name="Nakano N."/>
            <person name="Nakauchi H."/>
            <person name="Ng P."/>
            <person name="Nilsson R."/>
            <person name="Nishiguchi S."/>
            <person name="Nishikawa S."/>
            <person name="Nori F."/>
            <person name="Ohara O."/>
            <person name="Okazaki Y."/>
            <person name="Orlando V."/>
            <person name="Pang K.C."/>
            <person name="Pavan W.J."/>
            <person name="Pavesi G."/>
            <person name="Pesole G."/>
            <person name="Petrovsky N."/>
            <person name="Piazza S."/>
            <person name="Reed J."/>
            <person name="Reid J.F."/>
            <person name="Ring B.Z."/>
            <person name="Ringwald M."/>
            <person name="Rost B."/>
            <person name="Ruan Y."/>
            <person name="Salzberg S.L."/>
            <person name="Sandelin A."/>
            <person name="Schneider C."/>
            <person name="Schoenbach C."/>
            <person name="Sekiguchi K."/>
            <person name="Semple C.A."/>
            <person name="Seno S."/>
            <person name="Sessa L."/>
            <person name="Sheng Y."/>
            <person name="Shibata Y."/>
            <person name="Shimada H."/>
            <person name="Shimada K."/>
            <person name="Silva D."/>
            <person name="Sinclair B."/>
            <person name="Sperling S."/>
            <person name="Stupka E."/>
            <person name="Sugiura K."/>
            <person name="Sultana R."/>
            <person name="Takenaka Y."/>
            <person name="Taki K."/>
            <person name="Tammoja K."/>
            <person name="Tan S.L."/>
            <person name="Tang S."/>
            <person name="Taylor M.S."/>
            <person name="Tegner J."/>
            <person name="Teichmann S.A."/>
            <person name="Ueda H.R."/>
            <person name="van Nimwegen E."/>
            <person name="Verardo R."/>
            <person name="Wei C.L."/>
            <person name="Yagi K."/>
            <person name="Yamanishi H."/>
            <person name="Zabarovsky E."/>
            <person name="Zhu S."/>
            <person name="Zimmer A."/>
            <person name="Hide W."/>
            <person name="Bult C."/>
            <person name="Grimmond S.M."/>
            <person name="Teasdale R.D."/>
            <person name="Liu E.T."/>
            <person name="Brusic V."/>
            <person name="Quackenbush J."/>
            <person name="Wahlestedt C."/>
            <person name="Mattick J.S."/>
            <person name="Hume D.A."/>
            <person name="Kai C."/>
            <person name="Sasaki D."/>
            <person name="Tomaru Y."/>
            <person name="Fukuda S."/>
            <person name="Kanamori-Katayama M."/>
            <person name="Suzuki M."/>
            <person name="Aoki J."/>
            <person name="Arakawa T."/>
            <person name="Iida J."/>
            <person name="Imamura K."/>
            <person name="Itoh M."/>
            <person name="Kato T."/>
            <person name="Kawaji H."/>
            <person name="Kawagashira N."/>
            <person name="Kawashima T."/>
            <person name="Kojima M."/>
            <person name="Kondo S."/>
            <person name="Konno H."/>
            <person name="Nakano K."/>
            <person name="Ninomiya N."/>
            <person name="Nishio T."/>
            <person name="Okada M."/>
            <person name="Plessy C."/>
            <person name="Shibata K."/>
            <person name="Shiraki T."/>
            <person name="Suzuki S."/>
            <person name="Tagami M."/>
            <person name="Waki K."/>
            <person name="Watahiki A."/>
            <person name="Okamura-Oho Y."/>
            <person name="Suzuki H."/>
            <person name="Kawai J."/>
            <person name="Hayashizaki Y."/>
        </authorList>
    </citation>
    <scope>NUCLEOTIDE SEQUENCE [LARGE SCALE MRNA] (ISOFORM 8)</scope>
    <source>
        <strain>C57BL/6J</strain>
        <tissue>Embryo</tissue>
    </source>
</reference>
<reference key="5">
    <citation type="journal article" date="2004" name="Genome Res.">
        <title>The status, quality, and expansion of the NIH full-length cDNA project: the Mammalian Gene Collection (MGC).</title>
        <authorList>
            <consortium name="The MGC Project Team"/>
        </authorList>
    </citation>
    <scope>NUCLEOTIDE SEQUENCE [LARGE SCALE MRNA] (ISOFORMS 1 AND 5)</scope>
    <source>
        <tissue>Brain</tissue>
    </source>
</reference>
<reference key="6">
    <citation type="journal article" date="2002" name="J. Biol. Chem.">
        <title>The Slp homology domain of synaptotagmin-like proteins 1-4 and Slac2 functions as a novel Rab27A binding domain.</title>
        <authorList>
            <person name="Kuroda T.S."/>
            <person name="Fukuda M."/>
            <person name="Ariga H."/>
            <person name="Mikoshiba K."/>
        </authorList>
    </citation>
    <scope>INTERACTION WITH RAB27A</scope>
</reference>
<reference key="7">
    <citation type="journal article" date="2004" name="Nat. Cell Biol.">
        <title>Rab27A-binding protein Slp2-a is required for peripheral melanosome distribution and elongated cell shape in melanocytes.</title>
        <authorList>
            <person name="Kuroda T.S."/>
            <person name="Fukuda M."/>
        </authorList>
    </citation>
    <scope>FUNCTION</scope>
    <scope>SUBCELLULAR LOCATION</scope>
    <scope>MUTAGENESIS OF LYS-698; LYS-699; LYS-700; LYS-705 AND LYS-706</scope>
</reference>
<reference key="8">
    <citation type="journal article" date="2006" name="Genes Cells">
        <title>Decreased basal mucus secretion by Slp2-a-deficient gastric surface mucous cells.</title>
        <authorList>
            <person name="Saegusa C."/>
            <person name="Tanaka T."/>
            <person name="Tani S."/>
            <person name="Itohara S."/>
            <person name="Mikoshiba K."/>
            <person name="Fukuda M."/>
        </authorList>
    </citation>
    <scope>FUNCTION</scope>
    <scope>DISRUPTION PHENOTYPE</scope>
    <scope>TISSUE SPECIFICITY</scope>
    <scope>INTERACTION WITH RAB27A AND RAB27B</scope>
</reference>
<reference key="9">
    <citation type="journal article" date="2007" name="Mol. Biol. Cell">
        <title>Exophilin4/Slp2-a targets glucagon granules to the plasma membrane through unique Ca2+-inhibitory phospholipid-binding activity of the C2A domain.</title>
        <authorList>
            <person name="Yu M."/>
            <person name="Kasai K."/>
            <person name="Nagashima K."/>
            <person name="Torii S."/>
            <person name="Yokota-Hashimoto H."/>
            <person name="Okamoto K."/>
            <person name="Takeuchi T."/>
            <person name="Gomi H."/>
            <person name="Izumi T."/>
        </authorList>
    </citation>
    <scope>SUBCELLULAR LOCATION</scope>
    <scope>INTERACTION WITH RAB27A</scope>
    <scope>TISSUE SPECIFICITY</scope>
</reference>
<reference key="10">
    <citation type="journal article" date="2006" name="Mol. Immunol.">
        <title>The usage of alternative splice sites in Mus musculus synaptotagmin-like 2 gene is modulated by cyclosporin A and FK506 in T-lymphocytes.</title>
        <authorList>
            <person name="Mascarell L."/>
            <person name="Auger R."/>
            <person name="Kanellopoulos J.M."/>
            <person name="Truffa-Bachi P."/>
        </authorList>
    </citation>
    <scope>ALTERNATIVE SPLICING (ISOFORMS 9 AND 10)</scope>
</reference>
<reference key="11">
    <citation type="journal article" date="2007" name="Mol. Cell. Proteomics">
        <title>Qualitative and quantitative analyses of protein phosphorylation in naive and stimulated mouse synaptosomal preparations.</title>
        <authorList>
            <person name="Munton R.P."/>
            <person name="Tweedie-Cullen R."/>
            <person name="Livingstone-Zatchej M."/>
            <person name="Weinandy F."/>
            <person name="Waidelich M."/>
            <person name="Longo D."/>
            <person name="Gehrig P."/>
            <person name="Potthast F."/>
            <person name="Rutishauser D."/>
            <person name="Gerrits B."/>
            <person name="Panse C."/>
            <person name="Schlapbach R."/>
            <person name="Mansuy I.M."/>
        </authorList>
    </citation>
    <scope>IDENTIFICATION BY MASS SPECTROMETRY [LARGE SCALE ANALYSIS]</scope>
    <source>
        <tissue>Brain cortex</tissue>
    </source>
</reference>
<reference key="12">
    <citation type="journal article" date="2010" name="Cell">
        <title>A tissue-specific atlas of mouse protein phosphorylation and expression.</title>
        <authorList>
            <person name="Huttlin E.L."/>
            <person name="Jedrychowski M.P."/>
            <person name="Elias J.E."/>
            <person name="Goswami T."/>
            <person name="Rad R."/>
            <person name="Beausoleil S.A."/>
            <person name="Villen J."/>
            <person name="Haas W."/>
            <person name="Sowa M.E."/>
            <person name="Gygi S.P."/>
        </authorList>
    </citation>
    <scope>IDENTIFICATION BY MASS SPECTROMETRY [LARGE SCALE ANALYSIS]</scope>
    <source>
        <tissue>Kidney</tissue>
    </source>
</reference>